<keyword id="KW-1185">Reference proteome</keyword>
<keyword id="KW-0687">Ribonucleoprotein</keyword>
<keyword id="KW-0689">Ribosomal protein</keyword>
<keyword id="KW-0694">RNA-binding</keyword>
<keyword id="KW-0699">rRNA-binding</keyword>
<dbReference type="EMBL" id="CP001191">
    <property type="protein sequence ID" value="ACI54635.1"/>
    <property type="molecule type" value="Genomic_DNA"/>
</dbReference>
<dbReference type="RefSeq" id="WP_003573791.1">
    <property type="nucleotide sequence ID" value="NC_011369.1"/>
</dbReference>
<dbReference type="SMR" id="B5ZYU4"/>
<dbReference type="STRING" id="395492.Rleg2_1341"/>
<dbReference type="KEGG" id="rlt:Rleg2_1341"/>
<dbReference type="eggNOG" id="COG0186">
    <property type="taxonomic scope" value="Bacteria"/>
</dbReference>
<dbReference type="HOGENOM" id="CLU_073626_1_1_5"/>
<dbReference type="Proteomes" id="UP000008330">
    <property type="component" value="Chromosome"/>
</dbReference>
<dbReference type="GO" id="GO:0022627">
    <property type="term" value="C:cytosolic small ribosomal subunit"/>
    <property type="evidence" value="ECO:0007669"/>
    <property type="project" value="TreeGrafter"/>
</dbReference>
<dbReference type="GO" id="GO:0019843">
    <property type="term" value="F:rRNA binding"/>
    <property type="evidence" value="ECO:0007669"/>
    <property type="project" value="UniProtKB-UniRule"/>
</dbReference>
<dbReference type="GO" id="GO:0003735">
    <property type="term" value="F:structural constituent of ribosome"/>
    <property type="evidence" value="ECO:0007669"/>
    <property type="project" value="InterPro"/>
</dbReference>
<dbReference type="GO" id="GO:0006412">
    <property type="term" value="P:translation"/>
    <property type="evidence" value="ECO:0007669"/>
    <property type="project" value="UniProtKB-UniRule"/>
</dbReference>
<dbReference type="CDD" id="cd00364">
    <property type="entry name" value="Ribosomal_uS17"/>
    <property type="match status" value="1"/>
</dbReference>
<dbReference type="Gene3D" id="2.40.50.140">
    <property type="entry name" value="Nucleic acid-binding proteins"/>
    <property type="match status" value="1"/>
</dbReference>
<dbReference type="HAMAP" id="MF_01345_B">
    <property type="entry name" value="Ribosomal_uS17_B"/>
    <property type="match status" value="1"/>
</dbReference>
<dbReference type="InterPro" id="IPR012340">
    <property type="entry name" value="NA-bd_OB-fold"/>
</dbReference>
<dbReference type="InterPro" id="IPR000266">
    <property type="entry name" value="Ribosomal_uS17"/>
</dbReference>
<dbReference type="InterPro" id="IPR019984">
    <property type="entry name" value="Ribosomal_uS17_bact/chlr"/>
</dbReference>
<dbReference type="NCBIfam" id="NF004123">
    <property type="entry name" value="PRK05610.1"/>
    <property type="match status" value="1"/>
</dbReference>
<dbReference type="NCBIfam" id="TIGR03635">
    <property type="entry name" value="uS17_bact"/>
    <property type="match status" value="1"/>
</dbReference>
<dbReference type="PANTHER" id="PTHR10744">
    <property type="entry name" value="40S RIBOSOMAL PROTEIN S11 FAMILY MEMBER"/>
    <property type="match status" value="1"/>
</dbReference>
<dbReference type="PANTHER" id="PTHR10744:SF1">
    <property type="entry name" value="SMALL RIBOSOMAL SUBUNIT PROTEIN US17M"/>
    <property type="match status" value="1"/>
</dbReference>
<dbReference type="Pfam" id="PF00366">
    <property type="entry name" value="Ribosomal_S17"/>
    <property type="match status" value="1"/>
</dbReference>
<dbReference type="PRINTS" id="PR00973">
    <property type="entry name" value="RIBOSOMALS17"/>
</dbReference>
<dbReference type="SUPFAM" id="SSF50249">
    <property type="entry name" value="Nucleic acid-binding proteins"/>
    <property type="match status" value="1"/>
</dbReference>
<reference key="1">
    <citation type="journal article" date="2010" name="Stand. Genomic Sci.">
        <title>Complete genome sequence of Rhizobium leguminosarum bv trifolii strain WSM2304, an effective microsymbiont of the South American clover Trifolium polymorphum.</title>
        <authorList>
            <person name="Reeve W."/>
            <person name="O'Hara G."/>
            <person name="Chain P."/>
            <person name="Ardley J."/>
            <person name="Brau L."/>
            <person name="Nandesena K."/>
            <person name="Tiwari R."/>
            <person name="Malfatti S."/>
            <person name="Kiss H."/>
            <person name="Lapidus A."/>
            <person name="Copeland A."/>
            <person name="Nolan M."/>
            <person name="Land M."/>
            <person name="Ivanova N."/>
            <person name="Mavromatis K."/>
            <person name="Markowitz V."/>
            <person name="Kyrpides N."/>
            <person name="Melino V."/>
            <person name="Denton M."/>
            <person name="Yates R."/>
            <person name="Howieson J."/>
        </authorList>
    </citation>
    <scope>NUCLEOTIDE SEQUENCE [LARGE SCALE GENOMIC DNA]</scope>
    <source>
        <strain>WSM2304</strain>
    </source>
</reference>
<gene>
    <name evidence="1" type="primary">rpsQ</name>
    <name type="ordered locus">Rleg2_1341</name>
</gene>
<organism>
    <name type="scientific">Rhizobium leguminosarum bv. trifolii (strain WSM2304)</name>
    <dbReference type="NCBI Taxonomy" id="395492"/>
    <lineage>
        <taxon>Bacteria</taxon>
        <taxon>Pseudomonadati</taxon>
        <taxon>Pseudomonadota</taxon>
        <taxon>Alphaproteobacteria</taxon>
        <taxon>Hyphomicrobiales</taxon>
        <taxon>Rhizobiaceae</taxon>
        <taxon>Rhizobium/Agrobacterium group</taxon>
        <taxon>Rhizobium</taxon>
    </lineage>
</organism>
<sequence length="79" mass="9104">MPKRILQGVVVGDKNEKTVVVRVERRFAHPLLQKTVRRSKKYKAHDENNQYKIGDTVSIEECAPISKDKRWTVISAQGQ</sequence>
<comment type="function">
    <text evidence="1">One of the primary rRNA binding proteins, it binds specifically to the 5'-end of 16S ribosomal RNA.</text>
</comment>
<comment type="subunit">
    <text evidence="1">Part of the 30S ribosomal subunit.</text>
</comment>
<comment type="similarity">
    <text evidence="1">Belongs to the universal ribosomal protein uS17 family.</text>
</comment>
<protein>
    <recommendedName>
        <fullName evidence="1">Small ribosomal subunit protein uS17</fullName>
    </recommendedName>
    <alternativeName>
        <fullName evidence="2">30S ribosomal protein S17</fullName>
    </alternativeName>
</protein>
<accession>B5ZYU4</accession>
<evidence type="ECO:0000255" key="1">
    <source>
        <dbReference type="HAMAP-Rule" id="MF_01345"/>
    </source>
</evidence>
<evidence type="ECO:0000305" key="2"/>
<name>RS17_RHILW</name>
<feature type="chain" id="PRO_1000143291" description="Small ribosomal subunit protein uS17">
    <location>
        <begin position="1"/>
        <end position="79"/>
    </location>
</feature>
<proteinExistence type="inferred from homology"/>